<dbReference type="EMBL" id="CP000438">
    <property type="protein sequence ID" value="ABJ12492.1"/>
    <property type="molecule type" value="Genomic_DNA"/>
</dbReference>
<dbReference type="RefSeq" id="WP_003109174.1">
    <property type="nucleotide sequence ID" value="NZ_CP034244.1"/>
</dbReference>
<dbReference type="SMR" id="Q02Q74"/>
<dbReference type="KEGG" id="pau:PA14_22040"/>
<dbReference type="PseudoCAP" id="PA14_22040"/>
<dbReference type="HOGENOM" id="CLU_067812_0_1_6"/>
<dbReference type="BioCyc" id="PAER208963:G1G74-1831-MONOMER"/>
<dbReference type="Proteomes" id="UP000000653">
    <property type="component" value="Chromosome"/>
</dbReference>
<dbReference type="GO" id="GO:0000902">
    <property type="term" value="P:cell morphogenesis"/>
    <property type="evidence" value="ECO:0007669"/>
    <property type="project" value="InterPro"/>
</dbReference>
<dbReference type="GO" id="GO:0000917">
    <property type="term" value="P:division septum assembly"/>
    <property type="evidence" value="ECO:0007669"/>
    <property type="project" value="UniProtKB-KW"/>
</dbReference>
<dbReference type="GO" id="GO:0051302">
    <property type="term" value="P:regulation of cell division"/>
    <property type="evidence" value="ECO:0007669"/>
    <property type="project" value="InterPro"/>
</dbReference>
<dbReference type="GO" id="GO:1901891">
    <property type="term" value="P:regulation of cell septum assembly"/>
    <property type="evidence" value="ECO:0007669"/>
    <property type="project" value="InterPro"/>
</dbReference>
<dbReference type="Gene3D" id="2.160.20.70">
    <property type="match status" value="1"/>
</dbReference>
<dbReference type="Gene3D" id="3.30.70.260">
    <property type="match status" value="1"/>
</dbReference>
<dbReference type="HAMAP" id="MF_00267">
    <property type="entry name" value="MinC"/>
    <property type="match status" value="1"/>
</dbReference>
<dbReference type="InterPro" id="IPR016098">
    <property type="entry name" value="CAP/MinC_C"/>
</dbReference>
<dbReference type="InterPro" id="IPR013033">
    <property type="entry name" value="MinC"/>
</dbReference>
<dbReference type="InterPro" id="IPR036145">
    <property type="entry name" value="MinC_C_sf"/>
</dbReference>
<dbReference type="InterPro" id="IPR007874">
    <property type="entry name" value="MinC_N"/>
</dbReference>
<dbReference type="InterPro" id="IPR005526">
    <property type="entry name" value="Septum_form_inhib_MinC_C"/>
</dbReference>
<dbReference type="NCBIfam" id="TIGR01222">
    <property type="entry name" value="minC"/>
    <property type="match status" value="1"/>
</dbReference>
<dbReference type="PANTHER" id="PTHR34108">
    <property type="entry name" value="SEPTUM SITE-DETERMINING PROTEIN MINC"/>
    <property type="match status" value="1"/>
</dbReference>
<dbReference type="PANTHER" id="PTHR34108:SF1">
    <property type="entry name" value="SEPTUM SITE-DETERMINING PROTEIN MINC"/>
    <property type="match status" value="1"/>
</dbReference>
<dbReference type="Pfam" id="PF03775">
    <property type="entry name" value="MinC_C"/>
    <property type="match status" value="1"/>
</dbReference>
<dbReference type="Pfam" id="PF05209">
    <property type="entry name" value="MinC_N"/>
    <property type="match status" value="1"/>
</dbReference>
<dbReference type="SUPFAM" id="SSF63848">
    <property type="entry name" value="Cell-division inhibitor MinC, C-terminal domain"/>
    <property type="match status" value="1"/>
</dbReference>
<protein>
    <recommendedName>
        <fullName evidence="1">Probable septum site-determining protein MinC</fullName>
    </recommendedName>
</protein>
<gene>
    <name evidence="1" type="primary">minC</name>
    <name type="ordered locus">PA14_22040</name>
</gene>
<evidence type="ECO:0000255" key="1">
    <source>
        <dbReference type="HAMAP-Rule" id="MF_00267"/>
    </source>
</evidence>
<evidence type="ECO:0000256" key="2">
    <source>
        <dbReference type="SAM" id="MobiDB-lite"/>
    </source>
</evidence>
<reference key="1">
    <citation type="journal article" date="2006" name="Genome Biol.">
        <title>Genomic analysis reveals that Pseudomonas aeruginosa virulence is combinatorial.</title>
        <authorList>
            <person name="Lee D.G."/>
            <person name="Urbach J.M."/>
            <person name="Wu G."/>
            <person name="Liberati N.T."/>
            <person name="Feinbaum R.L."/>
            <person name="Miyata S."/>
            <person name="Diggins L.T."/>
            <person name="He J."/>
            <person name="Saucier M."/>
            <person name="Deziel E."/>
            <person name="Friedman L."/>
            <person name="Li L."/>
            <person name="Grills G."/>
            <person name="Montgomery K."/>
            <person name="Kucherlapati R."/>
            <person name="Rahme L.G."/>
            <person name="Ausubel F.M."/>
        </authorList>
    </citation>
    <scope>NUCLEOTIDE SEQUENCE [LARGE SCALE GENOMIC DNA]</scope>
    <source>
        <strain>UCBPP-PA14</strain>
    </source>
</reference>
<name>MINC_PSEAB</name>
<organism>
    <name type="scientific">Pseudomonas aeruginosa (strain UCBPP-PA14)</name>
    <dbReference type="NCBI Taxonomy" id="208963"/>
    <lineage>
        <taxon>Bacteria</taxon>
        <taxon>Pseudomonadati</taxon>
        <taxon>Pseudomonadota</taxon>
        <taxon>Gammaproteobacteria</taxon>
        <taxon>Pseudomonadales</taxon>
        <taxon>Pseudomonadaceae</taxon>
        <taxon>Pseudomonas</taxon>
    </lineage>
</organism>
<sequence>MSQADLLDQDPVFQLKGSMLAVTILELAHNDLARLERQLADKVAQAPNFFRDTPLVMALDKLPEGEGRLDLPALLEVCRRHGLRTLAIRAGREEDIAAAQALDLPVLPPSGARERPLDIKDSAPRKPAEEPSPSAGEARPEPAKAEEKPADPVSRPTKVVKTPVRGGMQIYAAGGDLIVLAAVSPGAELLADGNIHVYGPMRGRALAGVKGDATARIFCQQLAAELVSIAGNYKVAEDLRRSPQWGKAVHVSLSGDVLNITRL</sequence>
<accession>Q02Q74</accession>
<proteinExistence type="inferred from homology"/>
<feature type="chain" id="PRO_1000047842" description="Probable septum site-determining protein MinC">
    <location>
        <begin position="1"/>
        <end position="263"/>
    </location>
</feature>
<feature type="region of interest" description="Disordered" evidence="2">
    <location>
        <begin position="107"/>
        <end position="159"/>
    </location>
</feature>
<feature type="compositionally biased region" description="Basic and acidic residues" evidence="2">
    <location>
        <begin position="112"/>
        <end position="129"/>
    </location>
</feature>
<feature type="compositionally biased region" description="Basic and acidic residues" evidence="2">
    <location>
        <begin position="138"/>
        <end position="150"/>
    </location>
</feature>
<keyword id="KW-0131">Cell cycle</keyword>
<keyword id="KW-0132">Cell division</keyword>
<keyword id="KW-0717">Septation</keyword>
<comment type="function">
    <text evidence="1">Cell division inhibitor that blocks the formation of polar Z ring septums. Rapidly oscillates between the poles of the cell to destabilize FtsZ filaments that have formed before they mature into polar Z rings. Prevents FtsZ polymerization.</text>
</comment>
<comment type="subunit">
    <text evidence="1">Interacts with MinD and FtsZ.</text>
</comment>
<comment type="similarity">
    <text evidence="1">Belongs to the MinC family.</text>
</comment>